<name>M2_I69A0</name>
<keyword id="KW-0025">Alternative splicing</keyword>
<keyword id="KW-1015">Disulfide bond</keyword>
<keyword id="KW-0325">Glycoprotein</keyword>
<keyword id="KW-1032">Host cell membrane</keyword>
<keyword id="KW-1043">Host membrane</keyword>
<keyword id="KW-0945">Host-virus interaction</keyword>
<keyword id="KW-0375">Hydrogen ion transport</keyword>
<keyword id="KW-1083">Inhibition of host autophagy by virus</keyword>
<keyword id="KW-0407">Ion channel</keyword>
<keyword id="KW-0406">Ion transport</keyword>
<keyword id="KW-0449">Lipoprotein</keyword>
<keyword id="KW-0472">Membrane</keyword>
<keyword id="KW-0564">Palmitate</keyword>
<keyword id="KW-0597">Phosphoprotein</keyword>
<keyword id="KW-0735">Signal-anchor</keyword>
<keyword id="KW-0812">Transmembrane</keyword>
<keyword id="KW-1133">Transmembrane helix</keyword>
<keyword id="KW-0813">Transport</keyword>
<keyword id="KW-1182">Viral ion channel</keyword>
<keyword id="KW-0946">Virion</keyword>
<gene>
    <name evidence="1" type="primary">M</name>
</gene>
<sequence>MSLLTEVETPIRNEWGCRCNDSSNPLVVAASIIGILHLILWILDRLFFKCITRFFEHGLKRGPSTEGVPESMREEYRKEQQSAVDADDGHFVSIELE</sequence>
<accession>Q6XT43</accession>
<organism>
    <name type="scientific">Influenza A virus (strain A/England/878/1969 H3N2)</name>
    <dbReference type="NCBI Taxonomy" id="387147"/>
    <lineage>
        <taxon>Viruses</taxon>
        <taxon>Riboviria</taxon>
        <taxon>Orthornavirae</taxon>
        <taxon>Negarnaviricota</taxon>
        <taxon>Polyploviricotina</taxon>
        <taxon>Insthoviricetes</taxon>
        <taxon>Articulavirales</taxon>
        <taxon>Orthomyxoviridae</taxon>
        <taxon>Alphainfluenzavirus</taxon>
        <taxon>Alphainfluenzavirus influenzae</taxon>
        <taxon>Influenza A virus</taxon>
    </lineage>
</organism>
<evidence type="ECO:0000255" key="1">
    <source>
        <dbReference type="HAMAP-Rule" id="MF_04069"/>
    </source>
</evidence>
<evidence type="ECO:0000256" key="2">
    <source>
        <dbReference type="SAM" id="MobiDB-lite"/>
    </source>
</evidence>
<comment type="function">
    <text evidence="1">Forms a proton-selective ion channel that is necessary for the efficient release of the viral genome during virus entry. After attaching to the cell surface, the virion enters the cell by endocytosis. Acidification of the endosome triggers M2 ion channel activity. The influx of protons into virion interior is believed to disrupt interactions between the viral ribonucleoprotein (RNP), matrix protein 1 (M1), and lipid bilayers, thereby freeing the viral genome from interaction with viral proteins and enabling RNA segments to migrate to the host cell nucleus, where influenza virus RNA transcription and replication occur. Also plays a role in viral proteins secretory pathway. Elevates the intravesicular pH of normally acidic compartments, such as trans-Golgi network, preventing newly formed hemagglutinin from premature switching to the fusion-active conformation.</text>
</comment>
<comment type="activity regulation">
    <text>The M2 protein from most influenza A strains is inhibited by amantadine and rimantadine, resulting in viral uncoating incapacity. Emergence of amantadine-resistant variants is usually rapid.</text>
</comment>
<comment type="subunit">
    <text evidence="1">Homotetramer; composed of two disulfide-linked dimers held together by non-covalent interactions. May interact with matrix protein 1.</text>
</comment>
<comment type="subcellular location">
    <subcellularLocation>
        <location evidence="1">Virion membrane</location>
    </subcellularLocation>
    <subcellularLocation>
        <location evidence="1">Host apical cell membrane</location>
        <topology evidence="1">Single-pass type III membrane protein</topology>
    </subcellularLocation>
    <text evidence="1">Abundantly expressed at the apical plasma membrane in infected polarized epithelial cells, in close proximity to budding and assembled virions. Minor component of virions (only 16-20 molecules/virion).</text>
</comment>
<comment type="alternative products">
    <event type="alternative splicing"/>
    <isoform>
        <id>Q6XT43-1</id>
        <name>M2</name>
        <sequence type="displayed"/>
    </isoform>
    <isoform>
        <id>Q6XT42-1</id>
        <name>M1</name>
        <sequence type="external"/>
    </isoform>
    <text>Only the first 9 residues are shared by the 2 isoforms.</text>
</comment>
<comment type="domain">
    <text evidence="1">Cytoplasmic tail plays an important role in virion assembly and morphogenesis.</text>
</comment>
<comment type="miscellaneous">
    <text evidence="1">When the channel is activated, one or more imidazole moieties of His-37 probably become bi-protonated.</text>
</comment>
<comment type="similarity">
    <text evidence="1">Belongs to the influenza viruses matrix protein M2 family.</text>
</comment>
<proteinExistence type="inferred from homology"/>
<reference key="1">
    <citation type="journal article" date="2004" name="Virology">
        <title>Genetic analysis of human H2N2 and early H3N2 influenza viruses, 1957-1972: evidence for genetic divergence and multiple reassortment events.</title>
        <authorList>
            <person name="Lindstrom S.E."/>
            <person name="Cox N.J."/>
            <person name="Klimov A."/>
        </authorList>
    </citation>
    <scope>NUCLEOTIDE SEQUENCE [GENOMIC RNA]</scope>
</reference>
<organismHost>
    <name type="scientific">Aves</name>
    <dbReference type="NCBI Taxonomy" id="8782"/>
</organismHost>
<organismHost>
    <name type="scientific">Homo sapiens</name>
    <name type="common">Human</name>
    <dbReference type="NCBI Taxonomy" id="9606"/>
</organismHost>
<organismHost>
    <name type="scientific">Mysticeti</name>
    <name type="common">baleen whales</name>
    <dbReference type="NCBI Taxonomy" id="9761"/>
</organismHost>
<organismHost>
    <name type="scientific">Phocidae</name>
    <name type="common">true seals</name>
    <dbReference type="NCBI Taxonomy" id="9709"/>
</organismHost>
<organismHost>
    <name type="scientific">Sus scrofa</name>
    <name type="common">Pig</name>
    <dbReference type="NCBI Taxonomy" id="9823"/>
</organismHost>
<dbReference type="EMBL" id="AY210254">
    <property type="protein sequence ID" value="AAO46682.1"/>
    <property type="molecule type" value="Genomic_RNA"/>
</dbReference>
<dbReference type="SMR" id="Q6XT43"/>
<dbReference type="IntAct" id="Q6XT43">
    <property type="interactions" value="1"/>
</dbReference>
<dbReference type="GlyCosmos" id="Q6XT43">
    <property type="glycosylation" value="1 site, No reported glycans"/>
</dbReference>
<dbReference type="GO" id="GO:0020002">
    <property type="term" value="C:host cell plasma membrane"/>
    <property type="evidence" value="ECO:0007669"/>
    <property type="project" value="UniProtKB-SubCell"/>
</dbReference>
<dbReference type="GO" id="GO:0016020">
    <property type="term" value="C:membrane"/>
    <property type="evidence" value="ECO:0007669"/>
    <property type="project" value="UniProtKB-UniRule"/>
</dbReference>
<dbReference type="GO" id="GO:0055036">
    <property type="term" value="C:virion membrane"/>
    <property type="evidence" value="ECO:0007669"/>
    <property type="project" value="UniProtKB-SubCell"/>
</dbReference>
<dbReference type="GO" id="GO:0005216">
    <property type="term" value="F:monoatomic ion channel activity"/>
    <property type="evidence" value="ECO:0007669"/>
    <property type="project" value="UniProtKB-UniRule"/>
</dbReference>
<dbReference type="GO" id="GO:0015078">
    <property type="term" value="F:proton transmembrane transporter activity"/>
    <property type="evidence" value="ECO:0007669"/>
    <property type="project" value="UniProtKB-UniRule"/>
</dbReference>
<dbReference type="GO" id="GO:0051259">
    <property type="term" value="P:protein complex oligomerization"/>
    <property type="evidence" value="ECO:0007669"/>
    <property type="project" value="UniProtKB-UniRule"/>
</dbReference>
<dbReference type="GO" id="GO:0044694">
    <property type="term" value="P:symbiont genome entry into host cell via pore formation in plasma membrane"/>
    <property type="evidence" value="ECO:0007669"/>
    <property type="project" value="UniProtKB-UniRule"/>
</dbReference>
<dbReference type="GO" id="GO:0140321">
    <property type="term" value="P:symbiont-mediated suppression of host autophagy"/>
    <property type="evidence" value="ECO:0007669"/>
    <property type="project" value="UniProtKB-KW"/>
</dbReference>
<dbReference type="Gene3D" id="6.10.250.1640">
    <property type="match status" value="1"/>
</dbReference>
<dbReference type="HAMAP" id="MF_04069">
    <property type="entry name" value="INFV_M2"/>
    <property type="match status" value="1"/>
</dbReference>
<dbReference type="InterPro" id="IPR002089">
    <property type="entry name" value="Flu_M2"/>
</dbReference>
<dbReference type="Pfam" id="PF00599">
    <property type="entry name" value="Flu_M2"/>
    <property type="match status" value="1"/>
</dbReference>
<feature type="chain" id="PRO_0000326349" description="Matrix protein 2">
    <location>
        <begin position="1"/>
        <end position="97"/>
    </location>
</feature>
<feature type="topological domain" description="Virion surface" evidence="1">
    <location>
        <begin position="1"/>
        <end position="22"/>
    </location>
</feature>
<feature type="transmembrane region" description="Helical; Signal-anchor for type III membrane protein" evidence="1">
    <location>
        <begin position="23"/>
        <end position="43"/>
    </location>
</feature>
<feature type="topological domain" description="Intravirion" evidence="1">
    <location>
        <begin position="44"/>
        <end position="97"/>
    </location>
</feature>
<feature type="region of interest" description="Disordered" evidence="2">
    <location>
        <begin position="59"/>
        <end position="88"/>
    </location>
</feature>
<feature type="compositionally biased region" description="Basic and acidic residues" evidence="2">
    <location>
        <begin position="71"/>
        <end position="80"/>
    </location>
</feature>
<feature type="site" description="Essential for channel activity, possibly by being protonated during channel activation, and by forming the channel gate and the selective filter" evidence="1">
    <location>
        <position position="37"/>
    </location>
</feature>
<feature type="site" description="Seems to be involved in pH gating" evidence="1">
    <location>
        <position position="41"/>
    </location>
</feature>
<feature type="modified residue" description="Phosphoserine; by host" evidence="1">
    <location>
        <position position="64"/>
    </location>
</feature>
<feature type="modified residue" description="Phosphoserine; by host" evidence="1">
    <location>
        <position position="82"/>
    </location>
</feature>
<feature type="modified residue" description="Phosphoserine; by host" evidence="1">
    <location>
        <position position="93"/>
    </location>
</feature>
<feature type="lipid moiety-binding region" description="S-palmitoyl cysteine; by host" evidence="1">
    <location>
        <position position="50"/>
    </location>
</feature>
<feature type="glycosylation site" description="N-linked (GlcNAc...) asparagine; by host" evidence="1">
    <location>
        <position position="20"/>
    </location>
</feature>
<feature type="disulfide bond" description="Interchain (with C-17)" evidence="1">
    <location>
        <position position="17"/>
    </location>
</feature>
<feature type="disulfide bond" description="Interchain (with C-19)" evidence="1">
    <location>
        <position position="19"/>
    </location>
</feature>
<protein>
    <recommendedName>
        <fullName evidence="1">Matrix protein 2</fullName>
    </recommendedName>
    <alternativeName>
        <fullName evidence="1">Proton channel protein M2</fullName>
    </alternativeName>
</protein>